<evidence type="ECO:0000255" key="1">
    <source>
        <dbReference type="HAMAP-Rule" id="MF_00113"/>
    </source>
</evidence>
<dbReference type="EC" id="2.4.99.17" evidence="1"/>
<dbReference type="EMBL" id="CT573326">
    <property type="protein sequence ID" value="CAK13903.1"/>
    <property type="molecule type" value="Genomic_DNA"/>
</dbReference>
<dbReference type="RefSeq" id="WP_011532328.1">
    <property type="nucleotide sequence ID" value="NC_008027.1"/>
</dbReference>
<dbReference type="SMR" id="Q1IEK2"/>
<dbReference type="STRING" id="384676.PSEEN0999"/>
<dbReference type="GeneID" id="32804295"/>
<dbReference type="KEGG" id="pen:PSEEN0999"/>
<dbReference type="eggNOG" id="COG0809">
    <property type="taxonomic scope" value="Bacteria"/>
</dbReference>
<dbReference type="HOGENOM" id="CLU_039110_1_0_6"/>
<dbReference type="OrthoDB" id="9805933at2"/>
<dbReference type="UniPathway" id="UPA00392"/>
<dbReference type="Proteomes" id="UP000000658">
    <property type="component" value="Chromosome"/>
</dbReference>
<dbReference type="GO" id="GO:0005737">
    <property type="term" value="C:cytoplasm"/>
    <property type="evidence" value="ECO:0007669"/>
    <property type="project" value="UniProtKB-SubCell"/>
</dbReference>
<dbReference type="GO" id="GO:0051075">
    <property type="term" value="F:S-adenosylmethionine:tRNA ribosyltransferase-isomerase activity"/>
    <property type="evidence" value="ECO:0007669"/>
    <property type="project" value="UniProtKB-EC"/>
</dbReference>
<dbReference type="GO" id="GO:0008616">
    <property type="term" value="P:queuosine biosynthetic process"/>
    <property type="evidence" value="ECO:0007669"/>
    <property type="project" value="UniProtKB-UniRule"/>
</dbReference>
<dbReference type="GO" id="GO:0002099">
    <property type="term" value="P:tRNA wobble guanine modification"/>
    <property type="evidence" value="ECO:0007669"/>
    <property type="project" value="TreeGrafter"/>
</dbReference>
<dbReference type="FunFam" id="2.40.10.240:FF:000001">
    <property type="entry name" value="S-adenosylmethionine:tRNA ribosyltransferase-isomerase"/>
    <property type="match status" value="1"/>
</dbReference>
<dbReference type="FunFam" id="3.40.1780.10:FF:000001">
    <property type="entry name" value="S-adenosylmethionine:tRNA ribosyltransferase-isomerase"/>
    <property type="match status" value="1"/>
</dbReference>
<dbReference type="Gene3D" id="2.40.10.240">
    <property type="entry name" value="QueA-like"/>
    <property type="match status" value="1"/>
</dbReference>
<dbReference type="Gene3D" id="3.40.1780.10">
    <property type="entry name" value="QueA-like"/>
    <property type="match status" value="1"/>
</dbReference>
<dbReference type="HAMAP" id="MF_00113">
    <property type="entry name" value="QueA"/>
    <property type="match status" value="1"/>
</dbReference>
<dbReference type="InterPro" id="IPR003699">
    <property type="entry name" value="QueA"/>
</dbReference>
<dbReference type="InterPro" id="IPR042118">
    <property type="entry name" value="QueA_dom1"/>
</dbReference>
<dbReference type="InterPro" id="IPR042119">
    <property type="entry name" value="QueA_dom2"/>
</dbReference>
<dbReference type="InterPro" id="IPR036100">
    <property type="entry name" value="QueA_sf"/>
</dbReference>
<dbReference type="NCBIfam" id="NF001140">
    <property type="entry name" value="PRK00147.1"/>
    <property type="match status" value="1"/>
</dbReference>
<dbReference type="NCBIfam" id="TIGR00113">
    <property type="entry name" value="queA"/>
    <property type="match status" value="1"/>
</dbReference>
<dbReference type="PANTHER" id="PTHR30307">
    <property type="entry name" value="S-ADENOSYLMETHIONINE:TRNA RIBOSYLTRANSFERASE-ISOMERASE"/>
    <property type="match status" value="1"/>
</dbReference>
<dbReference type="PANTHER" id="PTHR30307:SF0">
    <property type="entry name" value="S-ADENOSYLMETHIONINE:TRNA RIBOSYLTRANSFERASE-ISOMERASE"/>
    <property type="match status" value="1"/>
</dbReference>
<dbReference type="Pfam" id="PF02547">
    <property type="entry name" value="Queuosine_synth"/>
    <property type="match status" value="1"/>
</dbReference>
<dbReference type="SUPFAM" id="SSF111337">
    <property type="entry name" value="QueA-like"/>
    <property type="match status" value="1"/>
</dbReference>
<proteinExistence type="inferred from homology"/>
<keyword id="KW-0963">Cytoplasm</keyword>
<keyword id="KW-0671">Queuosine biosynthesis</keyword>
<keyword id="KW-0949">S-adenosyl-L-methionine</keyword>
<keyword id="KW-0808">Transferase</keyword>
<comment type="function">
    <text evidence="1">Transfers and isomerizes the ribose moiety from AdoMet to the 7-aminomethyl group of 7-deazaguanine (preQ1-tRNA) to give epoxyqueuosine (oQ-tRNA).</text>
</comment>
<comment type="catalytic activity">
    <reaction evidence="1">
        <text>7-aminomethyl-7-carbaguanosine(34) in tRNA + S-adenosyl-L-methionine = epoxyqueuosine(34) in tRNA + adenine + L-methionine + 2 H(+)</text>
        <dbReference type="Rhea" id="RHEA:32155"/>
        <dbReference type="Rhea" id="RHEA-COMP:10342"/>
        <dbReference type="Rhea" id="RHEA-COMP:18582"/>
        <dbReference type="ChEBI" id="CHEBI:15378"/>
        <dbReference type="ChEBI" id="CHEBI:16708"/>
        <dbReference type="ChEBI" id="CHEBI:57844"/>
        <dbReference type="ChEBI" id="CHEBI:59789"/>
        <dbReference type="ChEBI" id="CHEBI:82833"/>
        <dbReference type="ChEBI" id="CHEBI:194443"/>
        <dbReference type="EC" id="2.4.99.17"/>
    </reaction>
</comment>
<comment type="pathway">
    <text evidence="1">tRNA modification; tRNA-queuosine biosynthesis.</text>
</comment>
<comment type="subunit">
    <text evidence="1">Monomer.</text>
</comment>
<comment type="subcellular location">
    <subcellularLocation>
        <location evidence="1">Cytoplasm</location>
    </subcellularLocation>
</comment>
<comment type="similarity">
    <text evidence="1">Belongs to the QueA family.</text>
</comment>
<protein>
    <recommendedName>
        <fullName evidence="1">S-adenosylmethionine:tRNA ribosyltransferase-isomerase</fullName>
        <ecNumber evidence="1">2.4.99.17</ecNumber>
    </recommendedName>
    <alternativeName>
        <fullName evidence="1">Queuosine biosynthesis protein QueA</fullName>
    </alternativeName>
</protein>
<sequence>MRVADFSFELPDSLIARHPLAERHGSRLLVLDGPSGELAHKQFTDLLEYLRPGDLMVFNNTRVIPARLFGQKASGGKLEVLVERVLDSHRVLAHVRASKAPKEGAQILIDGGGEAEMVARHDTLFELRFSEEVLPLLERVGHMPLPPYIDRPDEGADRERYQTVYAERAGAVAAPTAGLHFDEALLEKIAAKGVERAFVTLHVGAGTFQPVRVDKIEDHTMHKEWLEVSQDVVDAVAACRARGGRVIAVGTTSVRSLESAARDGVLKAFSGDTDIFIFPGRPFHVVDCLVTNFHLPESTLLMLVSAFAGYPETMAAYAAAVEQGYRFFSYGDAMFITRNPAPRGPEDQA</sequence>
<reference key="1">
    <citation type="journal article" date="2006" name="Nat. Biotechnol.">
        <title>Complete genome sequence of the entomopathogenic and metabolically versatile soil bacterium Pseudomonas entomophila.</title>
        <authorList>
            <person name="Vodovar N."/>
            <person name="Vallenet D."/>
            <person name="Cruveiller S."/>
            <person name="Rouy Z."/>
            <person name="Barbe V."/>
            <person name="Acosta C."/>
            <person name="Cattolico L."/>
            <person name="Jubin C."/>
            <person name="Lajus A."/>
            <person name="Segurens B."/>
            <person name="Vacherie B."/>
            <person name="Wincker P."/>
            <person name="Weissenbach J."/>
            <person name="Lemaitre B."/>
            <person name="Medigue C."/>
            <person name="Boccard F."/>
        </authorList>
    </citation>
    <scope>NUCLEOTIDE SEQUENCE [LARGE SCALE GENOMIC DNA]</scope>
    <source>
        <strain>L48</strain>
    </source>
</reference>
<name>QUEA_PSEE4</name>
<feature type="chain" id="PRO_1000015249" description="S-adenosylmethionine:tRNA ribosyltransferase-isomerase">
    <location>
        <begin position="1"/>
        <end position="349"/>
    </location>
</feature>
<accession>Q1IEK2</accession>
<gene>
    <name evidence="1" type="primary">queA</name>
    <name type="ordered locus">PSEEN0999</name>
</gene>
<organism>
    <name type="scientific">Pseudomonas entomophila (strain L48)</name>
    <dbReference type="NCBI Taxonomy" id="384676"/>
    <lineage>
        <taxon>Bacteria</taxon>
        <taxon>Pseudomonadati</taxon>
        <taxon>Pseudomonadota</taxon>
        <taxon>Gammaproteobacteria</taxon>
        <taxon>Pseudomonadales</taxon>
        <taxon>Pseudomonadaceae</taxon>
        <taxon>Pseudomonas</taxon>
    </lineage>
</organism>